<proteinExistence type="inferred from homology"/>
<evidence type="ECO:0000255" key="1">
    <source>
        <dbReference type="HAMAP-Rule" id="MF_01347"/>
    </source>
</evidence>
<protein>
    <recommendedName>
        <fullName evidence="1">ATP synthase subunit beta 2</fullName>
        <ecNumber evidence="1">7.1.2.2</ecNumber>
    </recommendedName>
    <alternativeName>
        <fullName evidence="1">ATP synthase F1 sector subunit beta 2</fullName>
    </alternativeName>
    <alternativeName>
        <fullName evidence="1">F-ATPase subunit beta 2</fullName>
    </alternativeName>
</protein>
<dbReference type="EC" id="7.1.2.2" evidence="1"/>
<dbReference type="EMBL" id="AL445564">
    <property type="protein sequence ID" value="CAC13623.1"/>
    <property type="molecule type" value="Genomic_DNA"/>
</dbReference>
<dbReference type="PIR" id="B90568">
    <property type="entry name" value="B90568"/>
</dbReference>
<dbReference type="RefSeq" id="WP_010925251.1">
    <property type="nucleotide sequence ID" value="NC_002771.1"/>
</dbReference>
<dbReference type="SMR" id="Q98QB6"/>
<dbReference type="STRING" id="272635.gene:17577051"/>
<dbReference type="KEGG" id="mpu:MYPU_4500"/>
<dbReference type="eggNOG" id="COG0055">
    <property type="taxonomic scope" value="Bacteria"/>
</dbReference>
<dbReference type="HOGENOM" id="CLU_022398_0_2_14"/>
<dbReference type="BioCyc" id="MPUL272635:G1GT6-455-MONOMER"/>
<dbReference type="Proteomes" id="UP000000528">
    <property type="component" value="Chromosome"/>
</dbReference>
<dbReference type="GO" id="GO:0005886">
    <property type="term" value="C:plasma membrane"/>
    <property type="evidence" value="ECO:0007669"/>
    <property type="project" value="UniProtKB-SubCell"/>
</dbReference>
<dbReference type="GO" id="GO:0045259">
    <property type="term" value="C:proton-transporting ATP synthase complex"/>
    <property type="evidence" value="ECO:0007669"/>
    <property type="project" value="UniProtKB-KW"/>
</dbReference>
<dbReference type="GO" id="GO:0005524">
    <property type="term" value="F:ATP binding"/>
    <property type="evidence" value="ECO:0007669"/>
    <property type="project" value="UniProtKB-UniRule"/>
</dbReference>
<dbReference type="GO" id="GO:0016887">
    <property type="term" value="F:ATP hydrolysis activity"/>
    <property type="evidence" value="ECO:0007669"/>
    <property type="project" value="InterPro"/>
</dbReference>
<dbReference type="GO" id="GO:0046933">
    <property type="term" value="F:proton-transporting ATP synthase activity, rotational mechanism"/>
    <property type="evidence" value="ECO:0007669"/>
    <property type="project" value="UniProtKB-UniRule"/>
</dbReference>
<dbReference type="CDD" id="cd18110">
    <property type="entry name" value="ATP-synt_F1_beta_C"/>
    <property type="match status" value="1"/>
</dbReference>
<dbReference type="Gene3D" id="2.40.10.170">
    <property type="match status" value="1"/>
</dbReference>
<dbReference type="Gene3D" id="1.10.1140.10">
    <property type="entry name" value="Bovine Mitochondrial F1-atpase, Atp Synthase Beta Chain, Chain D, domain 3"/>
    <property type="match status" value="1"/>
</dbReference>
<dbReference type="Gene3D" id="3.40.50.300">
    <property type="entry name" value="P-loop containing nucleotide triphosphate hydrolases"/>
    <property type="match status" value="1"/>
</dbReference>
<dbReference type="HAMAP" id="MF_01347">
    <property type="entry name" value="ATP_synth_beta_bact"/>
    <property type="match status" value="1"/>
</dbReference>
<dbReference type="InterPro" id="IPR003593">
    <property type="entry name" value="AAA+_ATPase"/>
</dbReference>
<dbReference type="InterPro" id="IPR055190">
    <property type="entry name" value="ATP-synt_VA_C"/>
</dbReference>
<dbReference type="InterPro" id="IPR005722">
    <property type="entry name" value="ATP_synth_F1_bsu"/>
</dbReference>
<dbReference type="InterPro" id="IPR020003">
    <property type="entry name" value="ATPase_a/bsu_AS"/>
</dbReference>
<dbReference type="InterPro" id="IPR050053">
    <property type="entry name" value="ATPase_alpha/beta_chains"/>
</dbReference>
<dbReference type="InterPro" id="IPR036121">
    <property type="entry name" value="ATPase_F1/V1/A1_a/bsu_N_sf"/>
</dbReference>
<dbReference type="InterPro" id="IPR000194">
    <property type="entry name" value="ATPase_F1/V1/A1_a/bsu_nucl-bd"/>
</dbReference>
<dbReference type="InterPro" id="IPR024034">
    <property type="entry name" value="ATPase_F1/V1_b/a_C"/>
</dbReference>
<dbReference type="InterPro" id="IPR027417">
    <property type="entry name" value="P-loop_NTPase"/>
</dbReference>
<dbReference type="NCBIfam" id="NF045934">
    <property type="entry name" value="MSC_0618_beta"/>
    <property type="match status" value="1"/>
</dbReference>
<dbReference type="PANTHER" id="PTHR15184">
    <property type="entry name" value="ATP SYNTHASE"/>
    <property type="match status" value="1"/>
</dbReference>
<dbReference type="PANTHER" id="PTHR15184:SF71">
    <property type="entry name" value="ATP SYNTHASE SUBUNIT BETA, MITOCHONDRIAL"/>
    <property type="match status" value="1"/>
</dbReference>
<dbReference type="Pfam" id="PF00006">
    <property type="entry name" value="ATP-synt_ab"/>
    <property type="match status" value="1"/>
</dbReference>
<dbReference type="Pfam" id="PF22919">
    <property type="entry name" value="ATP-synt_VA_C"/>
    <property type="match status" value="1"/>
</dbReference>
<dbReference type="SMART" id="SM00382">
    <property type="entry name" value="AAA"/>
    <property type="match status" value="1"/>
</dbReference>
<dbReference type="SUPFAM" id="SSF47917">
    <property type="entry name" value="C-terminal domain of alpha and beta subunits of F1 ATP synthase"/>
    <property type="match status" value="1"/>
</dbReference>
<dbReference type="SUPFAM" id="SSF50615">
    <property type="entry name" value="N-terminal domain of alpha and beta subunits of F1 ATP synthase"/>
    <property type="match status" value="1"/>
</dbReference>
<dbReference type="SUPFAM" id="SSF52540">
    <property type="entry name" value="P-loop containing nucleoside triphosphate hydrolases"/>
    <property type="match status" value="1"/>
</dbReference>
<dbReference type="PROSITE" id="PS00152">
    <property type="entry name" value="ATPASE_ALPHA_BETA"/>
    <property type="match status" value="1"/>
</dbReference>
<feature type="chain" id="PRO_0000144454" description="ATP synthase subunit beta 2">
    <location>
        <begin position="1"/>
        <end position="468"/>
    </location>
</feature>
<feature type="binding site" evidence="1">
    <location>
        <begin position="145"/>
        <end position="152"/>
    </location>
    <ligand>
        <name>ATP</name>
        <dbReference type="ChEBI" id="CHEBI:30616"/>
    </ligand>
</feature>
<sequence>MGKVKHLWSDVYDVEFSENELPNIGNILSLQDGKCFLMVERILSNTLVRAILIKIGEEQIKINDIAIDTKESFNVPVGSATNGAIFDVLGNLLNEHPGDFKKVEVDSTISTEKHFNSDNEIINTGIKIIDFFVPIIKGSKIGIFGGAGVGKTIIIKELIFNISRQRDSNDVKVFFVGTGERTREAKELYDELVNSSLIKSTSLFISQMNEPSGSRMKILPVGITAAEYARDSEQKDVLFFVDNIYRYLQAGRELSFSLGKKPSEAGYQATLVSDISSVQERLANSKHGSITSFQTVFLPMDDLNDPASVAILNHLDSSLVLSREIFAEGLFPAIDPLLSNSSLLQEKIVGKRHILLVKRVKKILHKYKQLEEMIMILGVQELEPNNRLIVKKAQQLKNYFSQNLFMASSYTKKPGFFADKEEMLDEIEKIVDGHYIDIPEYKFLYLGSSKKLDQIKANLEKDQKEQEN</sequence>
<keyword id="KW-0066">ATP synthesis</keyword>
<keyword id="KW-0067">ATP-binding</keyword>
<keyword id="KW-1003">Cell membrane</keyword>
<keyword id="KW-0139">CF(1)</keyword>
<keyword id="KW-0375">Hydrogen ion transport</keyword>
<keyword id="KW-0406">Ion transport</keyword>
<keyword id="KW-0472">Membrane</keyword>
<keyword id="KW-0547">Nucleotide-binding</keyword>
<keyword id="KW-1185">Reference proteome</keyword>
<keyword id="KW-1278">Translocase</keyword>
<keyword id="KW-0813">Transport</keyword>
<comment type="function">
    <text evidence="1">Produces ATP from ADP in the presence of a proton gradient across the membrane. The catalytic sites are hosted primarily by the beta subunits.</text>
</comment>
<comment type="catalytic activity">
    <reaction evidence="1">
        <text>ATP + H2O + 4 H(+)(in) = ADP + phosphate + 5 H(+)(out)</text>
        <dbReference type="Rhea" id="RHEA:57720"/>
        <dbReference type="ChEBI" id="CHEBI:15377"/>
        <dbReference type="ChEBI" id="CHEBI:15378"/>
        <dbReference type="ChEBI" id="CHEBI:30616"/>
        <dbReference type="ChEBI" id="CHEBI:43474"/>
        <dbReference type="ChEBI" id="CHEBI:456216"/>
        <dbReference type="EC" id="7.1.2.2"/>
    </reaction>
</comment>
<comment type="subunit">
    <text evidence="1">F-type ATPases have 2 components, CF(1) - the catalytic core - and CF(0) - the membrane proton channel. CF(1) has five subunits: alpha(3), beta(3), gamma(1), delta(1), epsilon(1). CF(0) has three main subunits: a(1), b(2) and c(9-12). The alpha and beta chains form an alternating ring which encloses part of the gamma chain. CF(1) is attached to CF(0) by a central stalk formed by the gamma and epsilon chains, while a peripheral stalk is formed by the delta and b chains.</text>
</comment>
<comment type="subcellular location">
    <subcellularLocation>
        <location evidence="1">Cell membrane</location>
        <topology evidence="1">Peripheral membrane protein</topology>
    </subcellularLocation>
</comment>
<comment type="similarity">
    <text evidence="1">Belongs to the ATPase alpha/beta chains family.</text>
</comment>
<gene>
    <name evidence="1" type="primary">atpD2</name>
    <name type="ordered locus">MYPU_4500</name>
</gene>
<accession>Q98QB6</accession>
<organism>
    <name type="scientific">Mycoplasmopsis pulmonis (strain UAB CTIP)</name>
    <name type="common">Mycoplasma pulmonis</name>
    <dbReference type="NCBI Taxonomy" id="272635"/>
    <lineage>
        <taxon>Bacteria</taxon>
        <taxon>Bacillati</taxon>
        <taxon>Mycoplasmatota</taxon>
        <taxon>Mycoplasmoidales</taxon>
        <taxon>Metamycoplasmataceae</taxon>
        <taxon>Mycoplasmopsis</taxon>
    </lineage>
</organism>
<name>ATPB2_MYCPU</name>
<reference key="1">
    <citation type="journal article" date="2001" name="Nucleic Acids Res.">
        <title>The complete genome sequence of the murine respiratory pathogen Mycoplasma pulmonis.</title>
        <authorList>
            <person name="Chambaud I."/>
            <person name="Heilig R."/>
            <person name="Ferris S."/>
            <person name="Barbe V."/>
            <person name="Samson D."/>
            <person name="Galisson F."/>
            <person name="Moszer I."/>
            <person name="Dybvig K."/>
            <person name="Wroblewski H."/>
            <person name="Viari A."/>
            <person name="Rocha E.P.C."/>
            <person name="Blanchard A."/>
        </authorList>
    </citation>
    <scope>NUCLEOTIDE SEQUENCE [LARGE SCALE GENOMIC DNA]</scope>
    <source>
        <strain>UAB CTIP</strain>
    </source>
</reference>